<sequence length="235" mass="26302">MQQKNWTIDLEGMMAAGIHFGHQTQRWNPKMSPYIFTERKGVHILDLTQTARLLSEACDLVFDAAVEGKEFLMVGTKNQVTDLIVSAALKSQCHYVNEKWLAGTLTNWVTTETRLRRFQHLQTGGDLGEFDRLPKREAAILKGQLVRLKKCLGGIQYMSDLPDIAIITDQHEQSIALKECSILGIPTICIVDTDCDPDLVDVPIPGNDDARSSIRWILDKLALAISEGRSNIKVT</sequence>
<organism>
    <name type="scientific">Adiantum capillus-veneris</name>
    <name type="common">Maidenhair fern</name>
    <dbReference type="NCBI Taxonomy" id="13818"/>
    <lineage>
        <taxon>Eukaryota</taxon>
        <taxon>Viridiplantae</taxon>
        <taxon>Streptophyta</taxon>
        <taxon>Embryophyta</taxon>
        <taxon>Tracheophyta</taxon>
        <taxon>Polypodiopsida</taxon>
        <taxon>Polypodiidae</taxon>
        <taxon>Polypodiales</taxon>
        <taxon>Pteridineae</taxon>
        <taxon>Pteridaceae</taxon>
        <taxon>Vittarioideae</taxon>
        <taxon>Adiantum</taxon>
    </lineage>
</organism>
<accession>Q85FN0</accession>
<proteinExistence type="evidence at transcript level"/>
<protein>
    <recommendedName>
        <fullName evidence="2">Small ribosomal subunit protein uS2c</fullName>
    </recommendedName>
    <alternativeName>
        <fullName>30S ribosomal protein S2, chloroplastic</fullName>
    </alternativeName>
</protein>
<comment type="subcellular location">
    <subcellularLocation>
        <location>Plastid</location>
        <location>Chloroplast</location>
    </subcellularLocation>
</comment>
<comment type="RNA editing">
    <location>
        <position position="6" evidence="1"/>
    </location>
    <location>
        <position position="60" evidence="1"/>
    </location>
    <location>
        <position position="72" evidence="1"/>
    </location>
    <location>
        <position position="144" evidence="1"/>
    </location>
    <location>
        <position position="161" evidence="1"/>
    </location>
    <location>
        <position position="173" evidence="1"/>
    </location>
    <location>
        <position position="183" evidence="1"/>
    </location>
    <location>
        <position position="221" evidence="1"/>
    </location>
    <text>The nonsense codons at positions 144 and 173 are modified to sense codons.</text>
</comment>
<comment type="similarity">
    <text evidence="2">Belongs to the universal ribosomal protein uS2 family.</text>
</comment>
<feature type="chain" id="PRO_0000134286" description="Small ribosomal subunit protein uS2c">
    <location>
        <begin position="1"/>
        <end position="235"/>
    </location>
</feature>
<keyword id="KW-0150">Chloroplast</keyword>
<keyword id="KW-0934">Plastid</keyword>
<keyword id="KW-0687">Ribonucleoprotein</keyword>
<keyword id="KW-0689">Ribosomal protein</keyword>
<keyword id="KW-0691">RNA editing</keyword>
<name>RR2_ADICA</name>
<evidence type="ECO:0000269" key="1">
    <source>
    </source>
</evidence>
<evidence type="ECO:0000305" key="2"/>
<gene>
    <name type="primary">rps2</name>
</gene>
<dbReference type="EMBL" id="AY178864">
    <property type="protein sequence ID" value="AAP29381.3"/>
    <property type="molecule type" value="Genomic_DNA"/>
</dbReference>
<dbReference type="RefSeq" id="NP_848049.1">
    <property type="nucleotide sequence ID" value="NC_004766.1"/>
</dbReference>
<dbReference type="SMR" id="Q85FN0"/>
<dbReference type="GeneID" id="807356"/>
<dbReference type="GO" id="GO:0009507">
    <property type="term" value="C:chloroplast"/>
    <property type="evidence" value="ECO:0007669"/>
    <property type="project" value="UniProtKB-SubCell"/>
</dbReference>
<dbReference type="GO" id="GO:0005763">
    <property type="term" value="C:mitochondrial small ribosomal subunit"/>
    <property type="evidence" value="ECO:0007669"/>
    <property type="project" value="TreeGrafter"/>
</dbReference>
<dbReference type="GO" id="GO:0003735">
    <property type="term" value="F:structural constituent of ribosome"/>
    <property type="evidence" value="ECO:0007669"/>
    <property type="project" value="InterPro"/>
</dbReference>
<dbReference type="GO" id="GO:0006412">
    <property type="term" value="P:translation"/>
    <property type="evidence" value="ECO:0007669"/>
    <property type="project" value="UniProtKB-UniRule"/>
</dbReference>
<dbReference type="CDD" id="cd01425">
    <property type="entry name" value="RPS2"/>
    <property type="match status" value="1"/>
</dbReference>
<dbReference type="Gene3D" id="3.40.50.10490">
    <property type="entry name" value="Glucose-6-phosphate isomerase like protein, domain 1"/>
    <property type="match status" value="1"/>
</dbReference>
<dbReference type="Gene3D" id="1.10.287.610">
    <property type="entry name" value="Helix hairpin bin"/>
    <property type="match status" value="1"/>
</dbReference>
<dbReference type="HAMAP" id="MF_00291_B">
    <property type="entry name" value="Ribosomal_uS2_B"/>
    <property type="match status" value="1"/>
</dbReference>
<dbReference type="InterPro" id="IPR001865">
    <property type="entry name" value="Ribosomal_uS2"/>
</dbReference>
<dbReference type="InterPro" id="IPR005706">
    <property type="entry name" value="Ribosomal_uS2_bac/mit/plastid"/>
</dbReference>
<dbReference type="InterPro" id="IPR023591">
    <property type="entry name" value="Ribosomal_uS2_flav_dom_sf"/>
</dbReference>
<dbReference type="NCBIfam" id="TIGR01011">
    <property type="entry name" value="rpsB_bact"/>
    <property type="match status" value="1"/>
</dbReference>
<dbReference type="PANTHER" id="PTHR12534">
    <property type="entry name" value="30S RIBOSOMAL PROTEIN S2 PROKARYOTIC AND ORGANELLAR"/>
    <property type="match status" value="1"/>
</dbReference>
<dbReference type="PANTHER" id="PTHR12534:SF0">
    <property type="entry name" value="SMALL RIBOSOMAL SUBUNIT PROTEIN US2M"/>
    <property type="match status" value="1"/>
</dbReference>
<dbReference type="Pfam" id="PF00318">
    <property type="entry name" value="Ribosomal_S2"/>
    <property type="match status" value="1"/>
</dbReference>
<dbReference type="PRINTS" id="PR00395">
    <property type="entry name" value="RIBOSOMALS2"/>
</dbReference>
<dbReference type="SUPFAM" id="SSF52313">
    <property type="entry name" value="Ribosomal protein S2"/>
    <property type="match status" value="1"/>
</dbReference>
<geneLocation type="chloroplast"/>
<reference key="1">
    <citation type="journal article" date="2003" name="DNA Res.">
        <title>Complete nucleotide sequence of the chloroplast genome from a leptosporangiate fern, Adiantum capillus-veneris L.</title>
        <authorList>
            <person name="Wolf P.G."/>
            <person name="Rowe C.A."/>
            <person name="Sinclair R.B."/>
            <person name="Hasebe M."/>
        </authorList>
    </citation>
    <scope>NUCLEOTIDE SEQUENCE [LARGE SCALE GENOMIC DNA]</scope>
</reference>
<reference key="2">
    <citation type="journal article" date="2004" name="Gene">
        <title>High levels of RNA editing in a vascular plant chloroplast genome: analysis of transcripts from the fern Adiantum capillus-veneris.</title>
        <authorList>
            <person name="Wolf P.G."/>
            <person name="Rowe C.A."/>
            <person name="Hasebe M."/>
        </authorList>
    </citation>
    <scope>NUCLEOTIDE SEQUENCE [GENOMIC DNA]</scope>
    <scope>RNA EDITING</scope>
    <source>
        <tissue>Frond</tissue>
    </source>
</reference>